<protein>
    <recommendedName>
        <fullName>Transcriptional repressor RcnR</fullName>
    </recommendedName>
</protein>
<organism>
    <name type="scientific">Shigella flexneri serotype 5b (strain 8401)</name>
    <dbReference type="NCBI Taxonomy" id="373384"/>
    <lineage>
        <taxon>Bacteria</taxon>
        <taxon>Pseudomonadati</taxon>
        <taxon>Pseudomonadota</taxon>
        <taxon>Gammaproteobacteria</taxon>
        <taxon>Enterobacterales</taxon>
        <taxon>Enterobacteriaceae</taxon>
        <taxon>Shigella</taxon>
    </lineage>
</organism>
<reference key="1">
    <citation type="journal article" date="2006" name="BMC Genomics">
        <title>Complete genome sequence of Shigella flexneri 5b and comparison with Shigella flexneri 2a.</title>
        <authorList>
            <person name="Nie H."/>
            <person name="Yang F."/>
            <person name="Zhang X."/>
            <person name="Yang J."/>
            <person name="Chen L."/>
            <person name="Wang J."/>
            <person name="Xiong Z."/>
            <person name="Peng J."/>
            <person name="Sun L."/>
            <person name="Dong J."/>
            <person name="Xue Y."/>
            <person name="Xu X."/>
            <person name="Chen S."/>
            <person name="Yao Z."/>
            <person name="Shen Y."/>
            <person name="Jin Q."/>
        </authorList>
    </citation>
    <scope>NUCLEOTIDE SEQUENCE [LARGE SCALE GENOMIC DNA]</scope>
    <source>
        <strain>8401</strain>
    </source>
</reference>
<accession>Q0T334</accession>
<feature type="chain" id="PRO_0000332705" description="Transcriptional repressor RcnR">
    <location>
        <begin position="1"/>
        <end position="90"/>
    </location>
</feature>
<comment type="function">
    <text evidence="1">Repressor of rcnA expression. Acts by binding specifically to the rcnA promoter in the absence of nickel and cobalt. In the presence of one of these metals, it has a weaker affinity for rcnA promoter (By similarity).</text>
</comment>
<comment type="subcellular location">
    <subcellularLocation>
        <location evidence="2">Cytoplasm</location>
    </subcellularLocation>
</comment>
<comment type="similarity">
    <text evidence="2">Belongs to the FrmR/RcnR family.</text>
</comment>
<evidence type="ECO:0000250" key="1"/>
<evidence type="ECO:0000305" key="2"/>
<gene>
    <name type="primary">rcnR</name>
    <name type="ordered locus">SFV_2160</name>
</gene>
<sequence length="90" mass="10134">MSHTIRDKQKLKARASKIQGQVVALKKMLDEPHECAAVLQQIAAIRGAVNGLMREVIKGHLTEHIVHQGDELKREEDLDVVLKVLDSYIK</sequence>
<name>RCNR_SHIF8</name>
<dbReference type="EMBL" id="CP000266">
    <property type="protein sequence ID" value="ABF04281.1"/>
    <property type="molecule type" value="Genomic_DNA"/>
</dbReference>
<dbReference type="RefSeq" id="WP_000019944.1">
    <property type="nucleotide sequence ID" value="NC_008258.1"/>
</dbReference>
<dbReference type="SMR" id="Q0T334"/>
<dbReference type="GeneID" id="93775089"/>
<dbReference type="KEGG" id="sfv:SFV_2160"/>
<dbReference type="HOGENOM" id="CLU_130332_3_0_6"/>
<dbReference type="Proteomes" id="UP000000659">
    <property type="component" value="Chromosome"/>
</dbReference>
<dbReference type="GO" id="GO:0005737">
    <property type="term" value="C:cytoplasm"/>
    <property type="evidence" value="ECO:0007669"/>
    <property type="project" value="UniProtKB-SubCell"/>
</dbReference>
<dbReference type="GO" id="GO:0003677">
    <property type="term" value="F:DNA binding"/>
    <property type="evidence" value="ECO:0007669"/>
    <property type="project" value="UniProtKB-KW"/>
</dbReference>
<dbReference type="GO" id="GO:0046872">
    <property type="term" value="F:metal ion binding"/>
    <property type="evidence" value="ECO:0007669"/>
    <property type="project" value="InterPro"/>
</dbReference>
<dbReference type="GO" id="GO:0045892">
    <property type="term" value="P:negative regulation of DNA-templated transcription"/>
    <property type="evidence" value="ECO:0007669"/>
    <property type="project" value="UniProtKB-ARBA"/>
</dbReference>
<dbReference type="CDD" id="cd10153">
    <property type="entry name" value="RcnR-FrmR-like_DUF156"/>
    <property type="match status" value="1"/>
</dbReference>
<dbReference type="FunFam" id="1.20.58.1000:FF:000001">
    <property type="entry name" value="Transcriptional repressor RcnR"/>
    <property type="match status" value="1"/>
</dbReference>
<dbReference type="Gene3D" id="1.20.58.1000">
    <property type="entry name" value="Metal-sensitive repressor, helix protomer"/>
    <property type="match status" value="1"/>
</dbReference>
<dbReference type="InterPro" id="IPR003735">
    <property type="entry name" value="Metal_Tscrpt_repr"/>
</dbReference>
<dbReference type="InterPro" id="IPR038390">
    <property type="entry name" value="Metal_Tscrpt_repr_sf"/>
</dbReference>
<dbReference type="NCBIfam" id="NF011613">
    <property type="entry name" value="PRK15039.1"/>
    <property type="match status" value="1"/>
</dbReference>
<dbReference type="PANTHER" id="PTHR33677">
    <property type="entry name" value="TRANSCRIPTIONAL REPRESSOR FRMR-RELATED"/>
    <property type="match status" value="1"/>
</dbReference>
<dbReference type="PANTHER" id="PTHR33677:SF1">
    <property type="entry name" value="TRANSCRIPTIONAL REPRESSOR RCNR"/>
    <property type="match status" value="1"/>
</dbReference>
<dbReference type="Pfam" id="PF02583">
    <property type="entry name" value="Trns_repr_metal"/>
    <property type="match status" value="1"/>
</dbReference>
<proteinExistence type="inferred from homology"/>
<keyword id="KW-0963">Cytoplasm</keyword>
<keyword id="KW-0238">DNA-binding</keyword>
<keyword id="KW-0678">Repressor</keyword>
<keyword id="KW-0804">Transcription</keyword>
<keyword id="KW-0805">Transcription regulation</keyword>